<protein>
    <recommendedName>
        <fullName evidence="1">Glycerol-3-phosphate dehydrogenase [NAD(P)+]</fullName>
        <ecNumber evidence="1">1.1.1.94</ecNumber>
    </recommendedName>
    <alternativeName>
        <fullName evidence="1">NAD(P)(+)-dependent glycerol-3-phosphate dehydrogenase</fullName>
    </alternativeName>
    <alternativeName>
        <fullName evidence="1">NAD(P)H-dependent dihydroxyacetone-phosphate reductase</fullName>
    </alternativeName>
</protein>
<name>GPDA_CLOPE</name>
<accession>Q8XJK2</accession>
<proteinExistence type="inferred from homology"/>
<comment type="function">
    <text evidence="1">Catalyzes the reduction of the glycolytic intermediate dihydroxyacetone phosphate (DHAP) to sn-glycerol 3-phosphate (G3P), the key precursor for phospholipid synthesis.</text>
</comment>
<comment type="catalytic activity">
    <reaction evidence="1">
        <text>sn-glycerol 3-phosphate + NAD(+) = dihydroxyacetone phosphate + NADH + H(+)</text>
        <dbReference type="Rhea" id="RHEA:11092"/>
        <dbReference type="ChEBI" id="CHEBI:15378"/>
        <dbReference type="ChEBI" id="CHEBI:57540"/>
        <dbReference type="ChEBI" id="CHEBI:57597"/>
        <dbReference type="ChEBI" id="CHEBI:57642"/>
        <dbReference type="ChEBI" id="CHEBI:57945"/>
        <dbReference type="EC" id="1.1.1.94"/>
    </reaction>
    <physiologicalReaction direction="right-to-left" evidence="1">
        <dbReference type="Rhea" id="RHEA:11094"/>
    </physiologicalReaction>
</comment>
<comment type="catalytic activity">
    <reaction evidence="1">
        <text>sn-glycerol 3-phosphate + NADP(+) = dihydroxyacetone phosphate + NADPH + H(+)</text>
        <dbReference type="Rhea" id="RHEA:11096"/>
        <dbReference type="ChEBI" id="CHEBI:15378"/>
        <dbReference type="ChEBI" id="CHEBI:57597"/>
        <dbReference type="ChEBI" id="CHEBI:57642"/>
        <dbReference type="ChEBI" id="CHEBI:57783"/>
        <dbReference type="ChEBI" id="CHEBI:58349"/>
        <dbReference type="EC" id="1.1.1.94"/>
    </reaction>
    <physiologicalReaction direction="right-to-left" evidence="1">
        <dbReference type="Rhea" id="RHEA:11098"/>
    </physiologicalReaction>
</comment>
<comment type="pathway">
    <text evidence="1">Membrane lipid metabolism; glycerophospholipid metabolism.</text>
</comment>
<comment type="subcellular location">
    <subcellularLocation>
        <location evidence="1">Cytoplasm</location>
    </subcellularLocation>
</comment>
<comment type="similarity">
    <text evidence="1">Belongs to the NAD-dependent glycerol-3-phosphate dehydrogenase family.</text>
</comment>
<dbReference type="EC" id="1.1.1.94" evidence="1"/>
<dbReference type="EMBL" id="BA000016">
    <property type="protein sequence ID" value="BAB81460.1"/>
    <property type="molecule type" value="Genomic_DNA"/>
</dbReference>
<dbReference type="RefSeq" id="WP_003458497.1">
    <property type="nucleotide sequence ID" value="NC_003366.1"/>
</dbReference>
<dbReference type="SMR" id="Q8XJK2"/>
<dbReference type="STRING" id="195102.gene:10491018"/>
<dbReference type="KEGG" id="cpe:CPE1754"/>
<dbReference type="HOGENOM" id="CLU_033449_0_2_9"/>
<dbReference type="UniPathway" id="UPA00940"/>
<dbReference type="Proteomes" id="UP000000818">
    <property type="component" value="Chromosome"/>
</dbReference>
<dbReference type="GO" id="GO:0005829">
    <property type="term" value="C:cytosol"/>
    <property type="evidence" value="ECO:0007669"/>
    <property type="project" value="TreeGrafter"/>
</dbReference>
<dbReference type="GO" id="GO:0047952">
    <property type="term" value="F:glycerol-3-phosphate dehydrogenase [NAD(P)+] activity"/>
    <property type="evidence" value="ECO:0007669"/>
    <property type="project" value="UniProtKB-UniRule"/>
</dbReference>
<dbReference type="GO" id="GO:0051287">
    <property type="term" value="F:NAD binding"/>
    <property type="evidence" value="ECO:0007669"/>
    <property type="project" value="InterPro"/>
</dbReference>
<dbReference type="GO" id="GO:0005975">
    <property type="term" value="P:carbohydrate metabolic process"/>
    <property type="evidence" value="ECO:0007669"/>
    <property type="project" value="InterPro"/>
</dbReference>
<dbReference type="GO" id="GO:0046167">
    <property type="term" value="P:glycerol-3-phosphate biosynthetic process"/>
    <property type="evidence" value="ECO:0007669"/>
    <property type="project" value="UniProtKB-UniRule"/>
</dbReference>
<dbReference type="GO" id="GO:0046168">
    <property type="term" value="P:glycerol-3-phosphate catabolic process"/>
    <property type="evidence" value="ECO:0007669"/>
    <property type="project" value="InterPro"/>
</dbReference>
<dbReference type="GO" id="GO:0006650">
    <property type="term" value="P:glycerophospholipid metabolic process"/>
    <property type="evidence" value="ECO:0007669"/>
    <property type="project" value="UniProtKB-UniRule"/>
</dbReference>
<dbReference type="GO" id="GO:0008654">
    <property type="term" value="P:phospholipid biosynthetic process"/>
    <property type="evidence" value="ECO:0007669"/>
    <property type="project" value="UniProtKB-KW"/>
</dbReference>
<dbReference type="FunFam" id="1.10.1040.10:FF:000001">
    <property type="entry name" value="Glycerol-3-phosphate dehydrogenase [NAD(P)+]"/>
    <property type="match status" value="1"/>
</dbReference>
<dbReference type="FunFam" id="3.40.50.720:FF:000019">
    <property type="entry name" value="Glycerol-3-phosphate dehydrogenase [NAD(P)+]"/>
    <property type="match status" value="1"/>
</dbReference>
<dbReference type="Gene3D" id="1.10.1040.10">
    <property type="entry name" value="N-(1-d-carboxylethyl)-l-norvaline Dehydrogenase, domain 2"/>
    <property type="match status" value="1"/>
</dbReference>
<dbReference type="Gene3D" id="3.40.50.720">
    <property type="entry name" value="NAD(P)-binding Rossmann-like Domain"/>
    <property type="match status" value="1"/>
</dbReference>
<dbReference type="HAMAP" id="MF_00394">
    <property type="entry name" value="NAD_Glyc3P_dehydrog"/>
    <property type="match status" value="1"/>
</dbReference>
<dbReference type="InterPro" id="IPR008927">
    <property type="entry name" value="6-PGluconate_DH-like_C_sf"/>
</dbReference>
<dbReference type="InterPro" id="IPR013328">
    <property type="entry name" value="6PGD_dom2"/>
</dbReference>
<dbReference type="InterPro" id="IPR006168">
    <property type="entry name" value="G3P_DH_NAD-dep"/>
</dbReference>
<dbReference type="InterPro" id="IPR006109">
    <property type="entry name" value="G3P_DH_NAD-dep_C"/>
</dbReference>
<dbReference type="InterPro" id="IPR011128">
    <property type="entry name" value="G3P_DH_NAD-dep_N"/>
</dbReference>
<dbReference type="InterPro" id="IPR036291">
    <property type="entry name" value="NAD(P)-bd_dom_sf"/>
</dbReference>
<dbReference type="NCBIfam" id="NF000940">
    <property type="entry name" value="PRK00094.1-2"/>
    <property type="match status" value="1"/>
</dbReference>
<dbReference type="NCBIfam" id="NF000941">
    <property type="entry name" value="PRK00094.1-3"/>
    <property type="match status" value="1"/>
</dbReference>
<dbReference type="NCBIfam" id="NF000942">
    <property type="entry name" value="PRK00094.1-4"/>
    <property type="match status" value="1"/>
</dbReference>
<dbReference type="PANTHER" id="PTHR11728">
    <property type="entry name" value="GLYCEROL-3-PHOSPHATE DEHYDROGENASE"/>
    <property type="match status" value="1"/>
</dbReference>
<dbReference type="PANTHER" id="PTHR11728:SF1">
    <property type="entry name" value="GLYCEROL-3-PHOSPHATE DEHYDROGENASE [NAD(+)] 2, CHLOROPLASTIC"/>
    <property type="match status" value="1"/>
</dbReference>
<dbReference type="Pfam" id="PF07479">
    <property type="entry name" value="NAD_Gly3P_dh_C"/>
    <property type="match status" value="1"/>
</dbReference>
<dbReference type="Pfam" id="PF01210">
    <property type="entry name" value="NAD_Gly3P_dh_N"/>
    <property type="match status" value="1"/>
</dbReference>
<dbReference type="PIRSF" id="PIRSF000114">
    <property type="entry name" value="Glycerol-3-P_dh"/>
    <property type="match status" value="1"/>
</dbReference>
<dbReference type="PRINTS" id="PR00077">
    <property type="entry name" value="GPDHDRGNASE"/>
</dbReference>
<dbReference type="SUPFAM" id="SSF48179">
    <property type="entry name" value="6-phosphogluconate dehydrogenase C-terminal domain-like"/>
    <property type="match status" value="1"/>
</dbReference>
<dbReference type="SUPFAM" id="SSF51735">
    <property type="entry name" value="NAD(P)-binding Rossmann-fold domains"/>
    <property type="match status" value="1"/>
</dbReference>
<dbReference type="PROSITE" id="PS00957">
    <property type="entry name" value="NAD_G3PDH"/>
    <property type="match status" value="1"/>
</dbReference>
<gene>
    <name evidence="1" type="primary">gpsA</name>
    <name type="ordered locus">CPE1754</name>
</gene>
<keyword id="KW-0963">Cytoplasm</keyword>
<keyword id="KW-0444">Lipid biosynthesis</keyword>
<keyword id="KW-0443">Lipid metabolism</keyword>
<keyword id="KW-0520">NAD</keyword>
<keyword id="KW-0521">NADP</keyword>
<keyword id="KW-0547">Nucleotide-binding</keyword>
<keyword id="KW-0560">Oxidoreductase</keyword>
<keyword id="KW-0594">Phospholipid biosynthesis</keyword>
<keyword id="KW-1208">Phospholipid metabolism</keyword>
<keyword id="KW-1185">Reference proteome</keyword>
<sequence length="331" mass="35649">MSKVAFLGAGSFGTSLGILLGNKGVTVSLWDRDENVINDINVNRKNDKYIKDLTIPTNVTAYKDLDEALNGAEYVVLAVPSHVIRTACKNLKGKINDDVIIINIAKGIEEGTNLRLSQVINQELPNNKVVVLSGPSHAEEVSKGIPTTLVASSECMECAEKVQDLFMDKNFRIYTNDDIIGVEIGGAVKNIIALAAGVCDGIGYGDNSKAALMTRGMAEIARIGIKMGGKAETFFGLTGMGDLIVTCTSMHSRNRRAGILIGQGKTAEEAIEEVGMVVEGIKACKAFYELKEKEGVTMPITDIAYKVLFEGAKAENAVSLLMERDKKKEEI</sequence>
<organism>
    <name type="scientific">Clostridium perfringens (strain 13 / Type A)</name>
    <dbReference type="NCBI Taxonomy" id="195102"/>
    <lineage>
        <taxon>Bacteria</taxon>
        <taxon>Bacillati</taxon>
        <taxon>Bacillota</taxon>
        <taxon>Clostridia</taxon>
        <taxon>Eubacteriales</taxon>
        <taxon>Clostridiaceae</taxon>
        <taxon>Clostridium</taxon>
    </lineage>
</organism>
<evidence type="ECO:0000255" key="1">
    <source>
        <dbReference type="HAMAP-Rule" id="MF_00394"/>
    </source>
</evidence>
<feature type="chain" id="PRO_0000137948" description="Glycerol-3-phosphate dehydrogenase [NAD(P)+]">
    <location>
        <begin position="1"/>
        <end position="331"/>
    </location>
</feature>
<feature type="active site" description="Proton acceptor" evidence="1">
    <location>
        <position position="189"/>
    </location>
</feature>
<feature type="binding site" evidence="1">
    <location>
        <position position="11"/>
    </location>
    <ligand>
        <name>NADPH</name>
        <dbReference type="ChEBI" id="CHEBI:57783"/>
    </ligand>
</feature>
<feature type="binding site" evidence="1">
    <location>
        <position position="12"/>
    </location>
    <ligand>
        <name>NADPH</name>
        <dbReference type="ChEBI" id="CHEBI:57783"/>
    </ligand>
</feature>
<feature type="binding site" evidence="1">
    <location>
        <position position="32"/>
    </location>
    <ligand>
        <name>NADPH</name>
        <dbReference type="ChEBI" id="CHEBI:57783"/>
    </ligand>
</feature>
<feature type="binding site" evidence="1">
    <location>
        <position position="106"/>
    </location>
    <ligand>
        <name>NADPH</name>
        <dbReference type="ChEBI" id="CHEBI:57783"/>
    </ligand>
</feature>
<feature type="binding site" evidence="1">
    <location>
        <position position="106"/>
    </location>
    <ligand>
        <name>sn-glycerol 3-phosphate</name>
        <dbReference type="ChEBI" id="CHEBI:57597"/>
    </ligand>
</feature>
<feature type="binding site" evidence="1">
    <location>
        <position position="134"/>
    </location>
    <ligand>
        <name>sn-glycerol 3-phosphate</name>
        <dbReference type="ChEBI" id="CHEBI:57597"/>
    </ligand>
</feature>
<feature type="binding site" evidence="1">
    <location>
        <position position="136"/>
    </location>
    <ligand>
        <name>sn-glycerol 3-phosphate</name>
        <dbReference type="ChEBI" id="CHEBI:57597"/>
    </ligand>
</feature>
<feature type="binding site" evidence="1">
    <location>
        <position position="138"/>
    </location>
    <ligand>
        <name>NADPH</name>
        <dbReference type="ChEBI" id="CHEBI:57783"/>
    </ligand>
</feature>
<feature type="binding site" evidence="1">
    <location>
        <position position="189"/>
    </location>
    <ligand>
        <name>sn-glycerol 3-phosphate</name>
        <dbReference type="ChEBI" id="CHEBI:57597"/>
    </ligand>
</feature>
<feature type="binding site" evidence="1">
    <location>
        <position position="242"/>
    </location>
    <ligand>
        <name>sn-glycerol 3-phosphate</name>
        <dbReference type="ChEBI" id="CHEBI:57597"/>
    </ligand>
</feature>
<feature type="binding site" evidence="1">
    <location>
        <position position="252"/>
    </location>
    <ligand>
        <name>sn-glycerol 3-phosphate</name>
        <dbReference type="ChEBI" id="CHEBI:57597"/>
    </ligand>
</feature>
<feature type="binding site" evidence="1">
    <location>
        <position position="253"/>
    </location>
    <ligand>
        <name>NADPH</name>
        <dbReference type="ChEBI" id="CHEBI:57783"/>
    </ligand>
</feature>
<feature type="binding site" evidence="1">
    <location>
        <position position="253"/>
    </location>
    <ligand>
        <name>sn-glycerol 3-phosphate</name>
        <dbReference type="ChEBI" id="CHEBI:57597"/>
    </ligand>
</feature>
<feature type="binding site" evidence="1">
    <location>
        <position position="254"/>
    </location>
    <ligand>
        <name>sn-glycerol 3-phosphate</name>
        <dbReference type="ChEBI" id="CHEBI:57597"/>
    </ligand>
</feature>
<feature type="binding site" evidence="1">
    <location>
        <position position="277"/>
    </location>
    <ligand>
        <name>NADPH</name>
        <dbReference type="ChEBI" id="CHEBI:57783"/>
    </ligand>
</feature>
<feature type="binding site" evidence="1">
    <location>
        <position position="279"/>
    </location>
    <ligand>
        <name>NADPH</name>
        <dbReference type="ChEBI" id="CHEBI:57783"/>
    </ligand>
</feature>
<reference key="1">
    <citation type="journal article" date="2002" name="Proc. Natl. Acad. Sci. U.S.A.">
        <title>Complete genome sequence of Clostridium perfringens, an anaerobic flesh-eater.</title>
        <authorList>
            <person name="Shimizu T."/>
            <person name="Ohtani K."/>
            <person name="Hirakawa H."/>
            <person name="Ohshima K."/>
            <person name="Yamashita A."/>
            <person name="Shiba T."/>
            <person name="Ogasawara N."/>
            <person name="Hattori M."/>
            <person name="Kuhara S."/>
            <person name="Hayashi H."/>
        </authorList>
    </citation>
    <scope>NUCLEOTIDE SEQUENCE [LARGE SCALE GENOMIC DNA]</scope>
    <source>
        <strain>13 / Type A</strain>
    </source>
</reference>